<gene>
    <name evidence="1" type="primary">rpmD</name>
    <name type="ordered locus">HEAR3148</name>
</gene>
<feature type="chain" id="PRO_0000347103" description="Large ribosomal subunit protein uL30">
    <location>
        <begin position="1"/>
        <end position="59"/>
    </location>
</feature>
<comment type="subunit">
    <text evidence="1">Part of the 50S ribosomal subunit.</text>
</comment>
<comment type="similarity">
    <text evidence="1">Belongs to the universal ribosomal protein uL30 family.</text>
</comment>
<proteinExistence type="inferred from homology"/>
<sequence>MANTVKVKLVKGLIGTRETHRATVRGLGLRGINSVSELEDTPAVRGMINKVSYLVKVVS</sequence>
<evidence type="ECO:0000255" key="1">
    <source>
        <dbReference type="HAMAP-Rule" id="MF_01371"/>
    </source>
</evidence>
<evidence type="ECO:0000305" key="2"/>
<reference key="1">
    <citation type="journal article" date="2007" name="PLoS Genet.">
        <title>A tale of two oxidation states: bacterial colonization of arsenic-rich environments.</title>
        <authorList>
            <person name="Muller D."/>
            <person name="Medigue C."/>
            <person name="Koechler S."/>
            <person name="Barbe V."/>
            <person name="Barakat M."/>
            <person name="Talla E."/>
            <person name="Bonnefoy V."/>
            <person name="Krin E."/>
            <person name="Arsene-Ploetze F."/>
            <person name="Carapito C."/>
            <person name="Chandler M."/>
            <person name="Cournoyer B."/>
            <person name="Cruveiller S."/>
            <person name="Dossat C."/>
            <person name="Duval S."/>
            <person name="Heymann M."/>
            <person name="Leize E."/>
            <person name="Lieutaud A."/>
            <person name="Lievremont D."/>
            <person name="Makita Y."/>
            <person name="Mangenot S."/>
            <person name="Nitschke W."/>
            <person name="Ortet P."/>
            <person name="Perdrial N."/>
            <person name="Schoepp B."/>
            <person name="Siguier P."/>
            <person name="Simeonova D.D."/>
            <person name="Rouy Z."/>
            <person name="Segurens B."/>
            <person name="Turlin E."/>
            <person name="Vallenet D."/>
            <person name="van Dorsselaer A."/>
            <person name="Weiss S."/>
            <person name="Weissenbach J."/>
            <person name="Lett M.-C."/>
            <person name="Danchin A."/>
            <person name="Bertin P.N."/>
        </authorList>
    </citation>
    <scope>NUCLEOTIDE SEQUENCE [LARGE SCALE GENOMIC DNA]</scope>
    <source>
        <strain>ULPAs1</strain>
    </source>
</reference>
<accession>A4G9S0</accession>
<protein>
    <recommendedName>
        <fullName evidence="1">Large ribosomal subunit protein uL30</fullName>
    </recommendedName>
    <alternativeName>
        <fullName evidence="2">50S ribosomal protein L30</fullName>
    </alternativeName>
</protein>
<name>RL30_HERAR</name>
<dbReference type="EMBL" id="CU207211">
    <property type="protein sequence ID" value="CAL63257.1"/>
    <property type="molecule type" value="Genomic_DNA"/>
</dbReference>
<dbReference type="SMR" id="A4G9S0"/>
<dbReference type="STRING" id="204773.HEAR3148"/>
<dbReference type="KEGG" id="har:HEAR3148"/>
<dbReference type="eggNOG" id="COG1841">
    <property type="taxonomic scope" value="Bacteria"/>
</dbReference>
<dbReference type="HOGENOM" id="CLU_131047_1_4_4"/>
<dbReference type="Proteomes" id="UP000006697">
    <property type="component" value="Chromosome"/>
</dbReference>
<dbReference type="GO" id="GO:0022625">
    <property type="term" value="C:cytosolic large ribosomal subunit"/>
    <property type="evidence" value="ECO:0007669"/>
    <property type="project" value="TreeGrafter"/>
</dbReference>
<dbReference type="GO" id="GO:0003735">
    <property type="term" value="F:structural constituent of ribosome"/>
    <property type="evidence" value="ECO:0007669"/>
    <property type="project" value="InterPro"/>
</dbReference>
<dbReference type="GO" id="GO:0006412">
    <property type="term" value="P:translation"/>
    <property type="evidence" value="ECO:0007669"/>
    <property type="project" value="UniProtKB-UniRule"/>
</dbReference>
<dbReference type="CDD" id="cd01658">
    <property type="entry name" value="Ribosomal_L30"/>
    <property type="match status" value="1"/>
</dbReference>
<dbReference type="FunFam" id="3.30.1390.20:FF:000001">
    <property type="entry name" value="50S ribosomal protein L30"/>
    <property type="match status" value="1"/>
</dbReference>
<dbReference type="Gene3D" id="3.30.1390.20">
    <property type="entry name" value="Ribosomal protein L30, ferredoxin-like fold domain"/>
    <property type="match status" value="1"/>
</dbReference>
<dbReference type="HAMAP" id="MF_01371_B">
    <property type="entry name" value="Ribosomal_uL30_B"/>
    <property type="match status" value="1"/>
</dbReference>
<dbReference type="InterPro" id="IPR036919">
    <property type="entry name" value="Ribo_uL30_ferredoxin-like_sf"/>
</dbReference>
<dbReference type="InterPro" id="IPR005996">
    <property type="entry name" value="Ribosomal_uL30_bac-type"/>
</dbReference>
<dbReference type="InterPro" id="IPR016082">
    <property type="entry name" value="Ribosomal_uL30_ferredoxin-like"/>
</dbReference>
<dbReference type="NCBIfam" id="TIGR01308">
    <property type="entry name" value="rpmD_bact"/>
    <property type="match status" value="1"/>
</dbReference>
<dbReference type="PANTHER" id="PTHR15892:SF2">
    <property type="entry name" value="LARGE RIBOSOMAL SUBUNIT PROTEIN UL30M"/>
    <property type="match status" value="1"/>
</dbReference>
<dbReference type="PANTHER" id="PTHR15892">
    <property type="entry name" value="MITOCHONDRIAL RIBOSOMAL PROTEIN L30"/>
    <property type="match status" value="1"/>
</dbReference>
<dbReference type="Pfam" id="PF00327">
    <property type="entry name" value="Ribosomal_L30"/>
    <property type="match status" value="1"/>
</dbReference>
<dbReference type="PIRSF" id="PIRSF002211">
    <property type="entry name" value="Ribosomal_L30_bac-type"/>
    <property type="match status" value="1"/>
</dbReference>
<dbReference type="SUPFAM" id="SSF55129">
    <property type="entry name" value="Ribosomal protein L30p/L7e"/>
    <property type="match status" value="1"/>
</dbReference>
<keyword id="KW-1185">Reference proteome</keyword>
<keyword id="KW-0687">Ribonucleoprotein</keyword>
<keyword id="KW-0689">Ribosomal protein</keyword>
<organism>
    <name type="scientific">Herminiimonas arsenicoxydans</name>
    <dbReference type="NCBI Taxonomy" id="204773"/>
    <lineage>
        <taxon>Bacteria</taxon>
        <taxon>Pseudomonadati</taxon>
        <taxon>Pseudomonadota</taxon>
        <taxon>Betaproteobacteria</taxon>
        <taxon>Burkholderiales</taxon>
        <taxon>Oxalobacteraceae</taxon>
        <taxon>Herminiimonas</taxon>
    </lineage>
</organism>